<accession>Q39WK9</accession>
<name>SFSA_GEOMG</name>
<protein>
    <recommendedName>
        <fullName evidence="1">Sugar fermentation stimulation protein homolog</fullName>
    </recommendedName>
</protein>
<reference key="1">
    <citation type="journal article" date="2009" name="BMC Microbiol.">
        <title>The genome sequence of Geobacter metallireducens: features of metabolism, physiology and regulation common and dissimilar to Geobacter sulfurreducens.</title>
        <authorList>
            <person name="Aklujkar M."/>
            <person name="Krushkal J."/>
            <person name="DiBartolo G."/>
            <person name="Lapidus A."/>
            <person name="Land M.L."/>
            <person name="Lovley D.R."/>
        </authorList>
    </citation>
    <scope>NUCLEOTIDE SEQUENCE [LARGE SCALE GENOMIC DNA]</scope>
    <source>
        <strain>ATCC 53774 / DSM 7210 / GS-15</strain>
    </source>
</reference>
<organism>
    <name type="scientific">Geobacter metallireducens (strain ATCC 53774 / DSM 7210 / GS-15)</name>
    <dbReference type="NCBI Taxonomy" id="269799"/>
    <lineage>
        <taxon>Bacteria</taxon>
        <taxon>Pseudomonadati</taxon>
        <taxon>Thermodesulfobacteriota</taxon>
        <taxon>Desulfuromonadia</taxon>
        <taxon>Geobacterales</taxon>
        <taxon>Geobacteraceae</taxon>
        <taxon>Geobacter</taxon>
    </lineage>
</organism>
<proteinExistence type="inferred from homology"/>
<dbReference type="EMBL" id="CP000148">
    <property type="protein sequence ID" value="ABB31365.1"/>
    <property type="molecule type" value="Genomic_DNA"/>
</dbReference>
<dbReference type="RefSeq" id="WP_004513391.1">
    <property type="nucleotide sequence ID" value="NC_007517.1"/>
</dbReference>
<dbReference type="SMR" id="Q39WK9"/>
<dbReference type="STRING" id="269799.Gmet_1127"/>
<dbReference type="DNASU" id="3741584"/>
<dbReference type="KEGG" id="gme:Gmet_1127"/>
<dbReference type="eggNOG" id="COG1489">
    <property type="taxonomic scope" value="Bacteria"/>
</dbReference>
<dbReference type="HOGENOM" id="CLU_052299_2_0_7"/>
<dbReference type="Proteomes" id="UP000007073">
    <property type="component" value="Chromosome"/>
</dbReference>
<dbReference type="GO" id="GO:0003677">
    <property type="term" value="F:DNA binding"/>
    <property type="evidence" value="ECO:0007669"/>
    <property type="project" value="InterPro"/>
</dbReference>
<dbReference type="CDD" id="cd22359">
    <property type="entry name" value="SfsA-like_bacterial"/>
    <property type="match status" value="1"/>
</dbReference>
<dbReference type="FunFam" id="3.40.1350.60:FF:000001">
    <property type="entry name" value="Sugar fermentation stimulation protein A"/>
    <property type="match status" value="1"/>
</dbReference>
<dbReference type="Gene3D" id="2.40.50.580">
    <property type="match status" value="1"/>
</dbReference>
<dbReference type="Gene3D" id="3.40.1350.60">
    <property type="match status" value="1"/>
</dbReference>
<dbReference type="HAMAP" id="MF_00095">
    <property type="entry name" value="SfsA"/>
    <property type="match status" value="1"/>
</dbReference>
<dbReference type="InterPro" id="IPR018488">
    <property type="entry name" value="cNMP-bd_CS"/>
</dbReference>
<dbReference type="InterPro" id="IPR005224">
    <property type="entry name" value="SfsA"/>
</dbReference>
<dbReference type="InterPro" id="IPR040452">
    <property type="entry name" value="SfsA_C"/>
</dbReference>
<dbReference type="InterPro" id="IPR041465">
    <property type="entry name" value="SfsA_N"/>
</dbReference>
<dbReference type="NCBIfam" id="TIGR00230">
    <property type="entry name" value="sfsA"/>
    <property type="match status" value="1"/>
</dbReference>
<dbReference type="PANTHER" id="PTHR30545">
    <property type="entry name" value="SUGAR FERMENTATION STIMULATION PROTEIN A"/>
    <property type="match status" value="1"/>
</dbReference>
<dbReference type="PANTHER" id="PTHR30545:SF2">
    <property type="entry name" value="SUGAR FERMENTATION STIMULATION PROTEIN A"/>
    <property type="match status" value="1"/>
</dbReference>
<dbReference type="Pfam" id="PF03749">
    <property type="entry name" value="SfsA"/>
    <property type="match status" value="1"/>
</dbReference>
<dbReference type="Pfam" id="PF17746">
    <property type="entry name" value="SfsA_N"/>
    <property type="match status" value="1"/>
</dbReference>
<keyword id="KW-1185">Reference proteome</keyword>
<evidence type="ECO:0000255" key="1">
    <source>
        <dbReference type="HAMAP-Rule" id="MF_00095"/>
    </source>
</evidence>
<sequence length="232" mass="25832">MRLPTPLYPGTLVRRYQRFLADVQLADGTIVTAHCPNSGSMKGCNLPGSLVWLSKSTNPARKLAYTWELVMADGFWAGINTGLPNRLVREAIEDGTVTELQGYGSIRPEVRYGEERSRIDLLLEGEPGRCWVEVKNVTLVEGERALFPDAVTERGQKHLRELMEMVRRGDRGVIFYVVQRGDGEAVSPADAIDPKYGQLLRLAVANGVEALAYRALVTPEEIRLTERLPVIL</sequence>
<comment type="similarity">
    <text evidence="1">Belongs to the SfsA family.</text>
</comment>
<gene>
    <name evidence="1" type="primary">sfsA</name>
    <name type="ordered locus">Gmet_1127</name>
</gene>
<feature type="chain" id="PRO_0000340141" description="Sugar fermentation stimulation protein homolog">
    <location>
        <begin position="1"/>
        <end position="232"/>
    </location>
</feature>